<gene>
    <name evidence="1" type="primary">aroQ</name>
    <name type="ordered locus">BCQ_3986</name>
</gene>
<organism>
    <name type="scientific">Bacillus cereus (strain Q1)</name>
    <dbReference type="NCBI Taxonomy" id="361100"/>
    <lineage>
        <taxon>Bacteria</taxon>
        <taxon>Bacillati</taxon>
        <taxon>Bacillota</taxon>
        <taxon>Bacilli</taxon>
        <taxon>Bacillales</taxon>
        <taxon>Bacillaceae</taxon>
        <taxon>Bacillus</taxon>
        <taxon>Bacillus cereus group</taxon>
    </lineage>
</organism>
<keyword id="KW-0028">Amino-acid biosynthesis</keyword>
<keyword id="KW-0057">Aromatic amino acid biosynthesis</keyword>
<keyword id="KW-0456">Lyase</keyword>
<sequence length="146" mass="16195">MKKVLLVNGPNLNRLGVREVNVYGKGTLATLEADMKQEAETMGVELECFQSNHEGAIIDRIHEAEDIYEGIILNPGAFTHYSYAIRDAIASISIPVIEVHISNIHQRESFRHESVTAAVCAGQIVGFGFYGYKLALFALMEKLREA</sequence>
<reference key="1">
    <citation type="journal article" date="2009" name="J. Bacteriol.">
        <title>Complete genome sequence of the extremophilic Bacillus cereus strain Q1 with industrial applications.</title>
        <authorList>
            <person name="Xiong Z."/>
            <person name="Jiang Y."/>
            <person name="Qi D."/>
            <person name="Lu H."/>
            <person name="Yang F."/>
            <person name="Yang J."/>
            <person name="Chen L."/>
            <person name="Sun L."/>
            <person name="Xu X."/>
            <person name="Xue Y."/>
            <person name="Zhu Y."/>
            <person name="Jin Q."/>
        </authorList>
    </citation>
    <scope>NUCLEOTIDE SEQUENCE [LARGE SCALE GENOMIC DNA]</scope>
    <source>
        <strain>Q1</strain>
    </source>
</reference>
<evidence type="ECO:0000255" key="1">
    <source>
        <dbReference type="HAMAP-Rule" id="MF_00169"/>
    </source>
</evidence>
<protein>
    <recommendedName>
        <fullName evidence="1">3-dehydroquinate dehydratase</fullName>
        <shortName evidence="1">3-dehydroquinase</shortName>
        <ecNumber evidence="1">4.2.1.10</ecNumber>
    </recommendedName>
    <alternativeName>
        <fullName evidence="1">Type II DHQase</fullName>
    </alternativeName>
</protein>
<comment type="function">
    <text evidence="1">Catalyzes a trans-dehydration via an enolate intermediate.</text>
</comment>
<comment type="catalytic activity">
    <reaction evidence="1">
        <text>3-dehydroquinate = 3-dehydroshikimate + H2O</text>
        <dbReference type="Rhea" id="RHEA:21096"/>
        <dbReference type="ChEBI" id="CHEBI:15377"/>
        <dbReference type="ChEBI" id="CHEBI:16630"/>
        <dbReference type="ChEBI" id="CHEBI:32364"/>
        <dbReference type="EC" id="4.2.1.10"/>
    </reaction>
</comment>
<comment type="pathway">
    <text evidence="1">Metabolic intermediate biosynthesis; chorismate biosynthesis; chorismate from D-erythrose 4-phosphate and phosphoenolpyruvate: step 3/7.</text>
</comment>
<comment type="subunit">
    <text evidence="1">Homododecamer.</text>
</comment>
<comment type="similarity">
    <text evidence="1">Belongs to the type-II 3-dehydroquinase family.</text>
</comment>
<proteinExistence type="inferred from homology"/>
<dbReference type="EC" id="4.2.1.10" evidence="1"/>
<dbReference type="EMBL" id="CP000227">
    <property type="protein sequence ID" value="ACM14414.1"/>
    <property type="molecule type" value="Genomic_DNA"/>
</dbReference>
<dbReference type="SMR" id="B9IXJ3"/>
<dbReference type="KEGG" id="bcq:BCQ_3986"/>
<dbReference type="HOGENOM" id="CLU_090968_3_0_9"/>
<dbReference type="UniPathway" id="UPA00053">
    <property type="reaction ID" value="UER00086"/>
</dbReference>
<dbReference type="Proteomes" id="UP000000441">
    <property type="component" value="Chromosome"/>
</dbReference>
<dbReference type="GO" id="GO:0003855">
    <property type="term" value="F:3-dehydroquinate dehydratase activity"/>
    <property type="evidence" value="ECO:0007669"/>
    <property type="project" value="UniProtKB-UniRule"/>
</dbReference>
<dbReference type="GO" id="GO:0008652">
    <property type="term" value="P:amino acid biosynthetic process"/>
    <property type="evidence" value="ECO:0007669"/>
    <property type="project" value="UniProtKB-KW"/>
</dbReference>
<dbReference type="GO" id="GO:0009073">
    <property type="term" value="P:aromatic amino acid family biosynthetic process"/>
    <property type="evidence" value="ECO:0007669"/>
    <property type="project" value="UniProtKB-KW"/>
</dbReference>
<dbReference type="GO" id="GO:0009423">
    <property type="term" value="P:chorismate biosynthetic process"/>
    <property type="evidence" value="ECO:0007669"/>
    <property type="project" value="UniProtKB-UniRule"/>
</dbReference>
<dbReference type="GO" id="GO:0019631">
    <property type="term" value="P:quinate catabolic process"/>
    <property type="evidence" value="ECO:0007669"/>
    <property type="project" value="TreeGrafter"/>
</dbReference>
<dbReference type="CDD" id="cd00466">
    <property type="entry name" value="DHQase_II"/>
    <property type="match status" value="1"/>
</dbReference>
<dbReference type="Gene3D" id="3.40.50.9100">
    <property type="entry name" value="Dehydroquinase, class II"/>
    <property type="match status" value="1"/>
</dbReference>
<dbReference type="HAMAP" id="MF_00169">
    <property type="entry name" value="AroQ"/>
    <property type="match status" value="1"/>
</dbReference>
<dbReference type="InterPro" id="IPR001874">
    <property type="entry name" value="DHquinase_II"/>
</dbReference>
<dbReference type="InterPro" id="IPR018509">
    <property type="entry name" value="DHquinase_II_CS"/>
</dbReference>
<dbReference type="InterPro" id="IPR036441">
    <property type="entry name" value="DHquinase_II_sf"/>
</dbReference>
<dbReference type="NCBIfam" id="TIGR01088">
    <property type="entry name" value="aroQ"/>
    <property type="match status" value="1"/>
</dbReference>
<dbReference type="NCBIfam" id="NF003805">
    <property type="entry name" value="PRK05395.1-2"/>
    <property type="match status" value="1"/>
</dbReference>
<dbReference type="NCBIfam" id="NF003806">
    <property type="entry name" value="PRK05395.1-3"/>
    <property type="match status" value="1"/>
</dbReference>
<dbReference type="NCBIfam" id="NF003807">
    <property type="entry name" value="PRK05395.1-4"/>
    <property type="match status" value="1"/>
</dbReference>
<dbReference type="PANTHER" id="PTHR21272">
    <property type="entry name" value="CATABOLIC 3-DEHYDROQUINASE"/>
    <property type="match status" value="1"/>
</dbReference>
<dbReference type="PANTHER" id="PTHR21272:SF3">
    <property type="entry name" value="CATABOLIC 3-DEHYDROQUINASE"/>
    <property type="match status" value="1"/>
</dbReference>
<dbReference type="Pfam" id="PF01220">
    <property type="entry name" value="DHquinase_II"/>
    <property type="match status" value="1"/>
</dbReference>
<dbReference type="PIRSF" id="PIRSF001399">
    <property type="entry name" value="DHquinase_II"/>
    <property type="match status" value="1"/>
</dbReference>
<dbReference type="SUPFAM" id="SSF52304">
    <property type="entry name" value="Type II 3-dehydroquinate dehydratase"/>
    <property type="match status" value="1"/>
</dbReference>
<dbReference type="PROSITE" id="PS01029">
    <property type="entry name" value="DEHYDROQUINASE_II"/>
    <property type="match status" value="1"/>
</dbReference>
<accession>B9IXJ3</accession>
<name>AROQ_BACCQ</name>
<feature type="chain" id="PRO_1000123682" description="3-dehydroquinate dehydratase">
    <location>
        <begin position="1"/>
        <end position="146"/>
    </location>
</feature>
<feature type="active site" description="Proton acceptor" evidence="1">
    <location>
        <position position="23"/>
    </location>
</feature>
<feature type="active site" description="Proton donor" evidence="1">
    <location>
        <position position="100"/>
    </location>
</feature>
<feature type="binding site" evidence="1">
    <location>
        <position position="74"/>
    </location>
    <ligand>
        <name>substrate</name>
    </ligand>
</feature>
<feature type="binding site" evidence="1">
    <location>
        <position position="80"/>
    </location>
    <ligand>
        <name>substrate</name>
    </ligand>
</feature>
<feature type="binding site" evidence="1">
    <location>
        <position position="87"/>
    </location>
    <ligand>
        <name>substrate</name>
    </ligand>
</feature>
<feature type="binding site" evidence="1">
    <location>
        <begin position="101"/>
        <end position="102"/>
    </location>
    <ligand>
        <name>substrate</name>
    </ligand>
</feature>
<feature type="binding site" evidence="1">
    <location>
        <position position="111"/>
    </location>
    <ligand>
        <name>substrate</name>
    </ligand>
</feature>
<feature type="site" description="Transition state stabilizer" evidence="1">
    <location>
        <position position="18"/>
    </location>
</feature>